<name>PPLA_PIG</name>
<reference key="1">
    <citation type="journal article" date="1989" name="Biochem. J.">
        <title>cDNA cloning and sequencing of phospholamban from pig stomach smooth muscle.</title>
        <authorList>
            <person name="Verboomen H."/>
            <person name="Wuytack F."/>
            <person name="Eggermont J.A."/>
            <person name="de Jaegere S."/>
            <person name="Missiaen L."/>
            <person name="Raeymaekers L."/>
            <person name="Casteels R."/>
        </authorList>
    </citation>
    <scope>NUCLEOTIDE SEQUENCE [MRNA]</scope>
    <source>
        <tissue>Smooth muscle</tissue>
    </source>
</reference>
<reference key="2">
    <citation type="submission" date="2000-08" db="PDB data bank">
        <title>NMR solution structure of phospholamban membrane protein.</title>
        <authorList>
            <person name="Lamberth S."/>
            <person name="Griesinger C."/>
            <person name="Schmid H."/>
            <person name="Carafoli E."/>
            <person name="Muenchbach M."/>
            <person name="Vorherr T."/>
            <person name="Krebs J."/>
        </authorList>
    </citation>
    <scope>STRUCTURE BY NMR</scope>
</reference>
<proteinExistence type="evidence at protein level"/>
<comment type="function">
    <text evidence="3 4">Reversibly inhibits the activity of ATP2A2/SERCA2 in cardiac sarcoplasmic reticulum by decreasing the apparent affinity of the ATPase for Ca(2+). Binds preferentially to the ATP-bound E1 conformational form of ATP2A2 which predominates at low Ca(2+) concentrations during the diastolic phase of the cardiac cycle. Inhibits ATP2A2 Ca(2+) affinity by disrupting its allosteric activation by ATP. Modulates the contractility of the heart muscle in response to physiological stimuli via its effects on ATP2A2. Modulates calcium re-uptake during muscle relaxation and plays an important role in calcium homeostasis in the heart muscle. The degree of ATP2A2 inhibition depends on the oligomeric state of PLN. ATP2A2 inhibition is alleviated by PLN phosphorylation. Also inhibits the activity of ATP2A3/SERCA3. Controls intracellular Ca(2+) levels in elongated spermatids and may play a role in germ cell differentiation. In the thalamic reticular nucleus of the brain, plays a role in the regulation of sleep patterns and executive functioning.</text>
</comment>
<comment type="subunit">
    <text evidence="2 4">Homopentamer. Can also form heterooligomers with other sarcoplasmic/endoplasmic reticulum calcium ATPase (SERCA) regulators ARLN, ERLN, SLN and STRIT1/DWORF. Monomer. Interacts with HAX1. Interacts as a monomer with ATP2A2; the interaction decreases ATP2A2 Ca(2+) affinity. Interacts with VMP1; VMP1 competes with PLN and SLN to prevent them from forming an inhibitory complex with ATP2A2. Interacts with S100A1 in a Ca(2+)-dependent manner.</text>
</comment>
<comment type="subcellular location">
    <subcellularLocation>
        <location evidence="2">Endoplasmic reticulum membrane</location>
        <topology evidence="5">Single-pass membrane protein</topology>
    </subcellularLocation>
    <subcellularLocation>
        <location evidence="2">Sarcoplasmic reticulum membrane</location>
        <topology evidence="5">Single-pass membrane protein</topology>
    </subcellularLocation>
    <subcellularLocation>
        <location evidence="1">Mitochondrion membrane</location>
        <topology evidence="5">Single-pass membrane protein</topology>
    </subcellularLocation>
    <subcellularLocation>
        <location evidence="4">Membrane</location>
        <topology evidence="5">Single-pass membrane protein</topology>
    </subcellularLocation>
    <text evidence="2">Colocalizes with HAX1 at the endoplasmic reticulum. Colocalizes with DMPK at the sarcoplasmic reticulum.</text>
</comment>
<comment type="PTM">
    <text evidence="2">Phosphorylation by PKA abolishes the inhibition of ATP2A2-mediated calcium uptake. Phosphorylated at Thr-17 by CaMK2, and in response to beta-adrenergic stimulation. Phosphorylation by DMPK may stimulate sarcoplasmic reticulum calcium uptake in cardiomyocytes (By similarity).</text>
</comment>
<comment type="PTM">
    <text evidence="4">Palmitoylated by ZDHHC16, promoting formation of the homopentamer.</text>
</comment>
<comment type="PTM">
    <text evidence="4">In elongated spermatids, proteolytically cleaved by SPPL2C which modulates intracellular Ca(2+) homeostasis.</text>
</comment>
<comment type="similarity">
    <text evidence="7">Belongs to the phospholamban family.</text>
</comment>
<protein>
    <recommendedName>
        <fullName evidence="6">Phospholamban</fullName>
        <shortName>PLB</shortName>
    </recommendedName>
</protein>
<accession>P61013</accession>
<accession>P07473</accession>
<gene>
    <name evidence="2" type="primary">PLN</name>
</gene>
<sequence>MDKVQYLTRSAIRRASTIEMPQQARQNLQNLFINFCLILICLLLICIIVMLL</sequence>
<feature type="chain" id="PRO_0000191246" description="Phospholamban">
    <location>
        <begin position="1"/>
        <end position="52"/>
    </location>
</feature>
<feature type="topological domain" description="Cytoplasmic" evidence="5">
    <location>
        <begin position="1"/>
        <end position="31"/>
    </location>
</feature>
<feature type="transmembrane region" description="Helical" evidence="5">
    <location>
        <begin position="32"/>
        <end position="52"/>
    </location>
</feature>
<feature type="modified residue" description="N-acetylmethionine" evidence="1">
    <location>
        <position position="1"/>
    </location>
</feature>
<feature type="modified residue" description="Phosphoserine; by PKA and DMPK" evidence="3">
    <location>
        <position position="16"/>
    </location>
</feature>
<feature type="modified residue" description="Phosphothreonine; by CaMK2" evidence="3">
    <location>
        <position position="17"/>
    </location>
</feature>
<feature type="lipid moiety-binding region" description="S-palmitoyl cysteine" evidence="4">
    <location>
        <position position="36"/>
    </location>
</feature>
<feature type="helix" evidence="8">
    <location>
        <begin position="4"/>
        <end position="16"/>
    </location>
</feature>
<feature type="strand" evidence="8">
    <location>
        <begin position="17"/>
        <end position="20"/>
    </location>
</feature>
<feature type="helix" evidence="8">
    <location>
        <begin position="21"/>
        <end position="49"/>
    </location>
</feature>
<organism>
    <name type="scientific">Sus scrofa</name>
    <name type="common">Pig</name>
    <dbReference type="NCBI Taxonomy" id="9823"/>
    <lineage>
        <taxon>Eukaryota</taxon>
        <taxon>Metazoa</taxon>
        <taxon>Chordata</taxon>
        <taxon>Craniata</taxon>
        <taxon>Vertebrata</taxon>
        <taxon>Euteleostomi</taxon>
        <taxon>Mammalia</taxon>
        <taxon>Eutheria</taxon>
        <taxon>Laurasiatheria</taxon>
        <taxon>Artiodactyla</taxon>
        <taxon>Suina</taxon>
        <taxon>Suidae</taxon>
        <taxon>Sus</taxon>
    </lineage>
</organism>
<evidence type="ECO:0000250" key="1">
    <source>
        <dbReference type="UniProtKB" id="A4IFH6"/>
    </source>
</evidence>
<evidence type="ECO:0000250" key="2">
    <source>
        <dbReference type="UniProtKB" id="P26678"/>
    </source>
</evidence>
<evidence type="ECO:0000250" key="3">
    <source>
        <dbReference type="UniProtKB" id="P61012"/>
    </source>
</evidence>
<evidence type="ECO:0000250" key="4">
    <source>
        <dbReference type="UniProtKB" id="P61014"/>
    </source>
</evidence>
<evidence type="ECO:0000255" key="5"/>
<evidence type="ECO:0000303" key="6">
    <source>
    </source>
</evidence>
<evidence type="ECO:0000305" key="7"/>
<evidence type="ECO:0007829" key="8">
    <source>
        <dbReference type="PDB" id="1FJK"/>
    </source>
</evidence>
<dbReference type="EMBL" id="X15075">
    <property type="protein sequence ID" value="CAA33171.1"/>
    <property type="molecule type" value="mRNA"/>
</dbReference>
<dbReference type="PIR" id="S05540">
    <property type="entry name" value="S05540"/>
</dbReference>
<dbReference type="RefSeq" id="NP_999378.1">
    <property type="nucleotide sequence ID" value="NM_214213.1"/>
</dbReference>
<dbReference type="PDB" id="1FJK">
    <property type="method" value="NMR"/>
    <property type="chains" value="A=1-52"/>
</dbReference>
<dbReference type="PDB" id="1FJP">
    <property type="method" value="NMR"/>
    <property type="chains" value="A=1-52"/>
</dbReference>
<dbReference type="PDBsum" id="1FJK"/>
<dbReference type="PDBsum" id="1FJP"/>
<dbReference type="BMRB" id="P61013"/>
<dbReference type="SMR" id="P61013"/>
<dbReference type="FunCoup" id="P61013">
    <property type="interactions" value="135"/>
</dbReference>
<dbReference type="iPTMnet" id="P61013"/>
<dbReference type="PaxDb" id="9823-ENSSSCP00000004587"/>
<dbReference type="PeptideAtlas" id="P61013"/>
<dbReference type="Ensembl" id="ENSSSCT00000097603.1">
    <property type="protein sequence ID" value="ENSSSCP00000080681.1"/>
    <property type="gene ID" value="ENSSSCG00000062089.1"/>
</dbReference>
<dbReference type="Ensembl" id="ENSSSCT00070018353.1">
    <property type="protein sequence ID" value="ENSSSCP00070015246.1"/>
    <property type="gene ID" value="ENSSSCG00070009472.1"/>
</dbReference>
<dbReference type="Ensembl" id="ENSSSCT00090053339">
    <property type="protein sequence ID" value="ENSSSCP00090033225"/>
    <property type="gene ID" value="ENSSSCG00090030143"/>
</dbReference>
<dbReference type="Ensembl" id="ENSSSCT00105053521">
    <property type="protein sequence ID" value="ENSSSCP00105037562"/>
    <property type="gene ID" value="ENSSSCG00105028198"/>
</dbReference>
<dbReference type="Ensembl" id="ENSSSCT00110004052">
    <property type="protein sequence ID" value="ENSSSCP00110003140"/>
    <property type="gene ID" value="ENSSSCG00110001973"/>
</dbReference>
<dbReference type="Ensembl" id="ENSSSCT00115001617">
    <property type="protein sequence ID" value="ENSSSCP00115001503"/>
    <property type="gene ID" value="ENSSSCG00115000965"/>
</dbReference>
<dbReference type="Ensembl" id="ENSSSCT00130046563">
    <property type="protein sequence ID" value="ENSSSCP00130032732"/>
    <property type="gene ID" value="ENSSSCG00130024090"/>
</dbReference>
<dbReference type="GeneID" id="397421"/>
<dbReference type="KEGG" id="ssc:397421"/>
<dbReference type="CTD" id="5350"/>
<dbReference type="eggNOG" id="ENOG502S97F">
    <property type="taxonomic scope" value="Eukaryota"/>
</dbReference>
<dbReference type="GeneTree" id="ENSGT00390000002403"/>
<dbReference type="HOGENOM" id="CLU_214576_0_0_1"/>
<dbReference type="InParanoid" id="P61013"/>
<dbReference type="OMA" id="QHTMRSA"/>
<dbReference type="TreeFam" id="TF330750"/>
<dbReference type="Reactome" id="R-SSC-5578775">
    <property type="pathway name" value="Ion homeostasis"/>
</dbReference>
<dbReference type="Reactome" id="R-SSC-936837">
    <property type="pathway name" value="Ion transport by P-type ATPases"/>
</dbReference>
<dbReference type="EvolutionaryTrace" id="P61013"/>
<dbReference type="Proteomes" id="UP000008227">
    <property type="component" value="Chromosome 1"/>
</dbReference>
<dbReference type="Proteomes" id="UP000314985">
    <property type="component" value="Chromosome 1"/>
</dbReference>
<dbReference type="Proteomes" id="UP000694570">
    <property type="component" value="Unplaced"/>
</dbReference>
<dbReference type="Proteomes" id="UP000694571">
    <property type="component" value="Unplaced"/>
</dbReference>
<dbReference type="Proteomes" id="UP000694720">
    <property type="component" value="Unplaced"/>
</dbReference>
<dbReference type="Proteomes" id="UP000694722">
    <property type="component" value="Unplaced"/>
</dbReference>
<dbReference type="Proteomes" id="UP000694723">
    <property type="component" value="Unplaced"/>
</dbReference>
<dbReference type="Proteomes" id="UP000694724">
    <property type="component" value="Unplaced"/>
</dbReference>
<dbReference type="Proteomes" id="UP000694725">
    <property type="component" value="Unplaced"/>
</dbReference>
<dbReference type="Proteomes" id="UP000694726">
    <property type="component" value="Unplaced"/>
</dbReference>
<dbReference type="Proteomes" id="UP000694727">
    <property type="component" value="Unplaced"/>
</dbReference>
<dbReference type="Proteomes" id="UP000694728">
    <property type="component" value="Unplaced"/>
</dbReference>
<dbReference type="GO" id="GO:0090534">
    <property type="term" value="C:calcium ion-transporting ATPase complex"/>
    <property type="evidence" value="ECO:0007669"/>
    <property type="project" value="Ensembl"/>
</dbReference>
<dbReference type="GO" id="GO:0005789">
    <property type="term" value="C:endoplasmic reticulum membrane"/>
    <property type="evidence" value="ECO:0000250"/>
    <property type="project" value="UniProtKB"/>
</dbReference>
<dbReference type="GO" id="GO:0016020">
    <property type="term" value="C:membrane"/>
    <property type="evidence" value="ECO:0000318"/>
    <property type="project" value="GO_Central"/>
</dbReference>
<dbReference type="GO" id="GO:0031966">
    <property type="term" value="C:mitochondrial membrane"/>
    <property type="evidence" value="ECO:0007669"/>
    <property type="project" value="UniProtKB-SubCell"/>
</dbReference>
<dbReference type="GO" id="GO:1990629">
    <property type="term" value="C:phospholamban complex"/>
    <property type="evidence" value="ECO:0007669"/>
    <property type="project" value="Ensembl"/>
</dbReference>
<dbReference type="GO" id="GO:0016529">
    <property type="term" value="C:sarcoplasmic reticulum"/>
    <property type="evidence" value="ECO:0000318"/>
    <property type="project" value="GO_Central"/>
</dbReference>
<dbReference type="GO" id="GO:0033017">
    <property type="term" value="C:sarcoplasmic reticulum membrane"/>
    <property type="evidence" value="ECO:0000250"/>
    <property type="project" value="UniProtKB"/>
</dbReference>
<dbReference type="GO" id="GO:0042030">
    <property type="term" value="F:ATPase inhibitor activity"/>
    <property type="evidence" value="ECO:0000318"/>
    <property type="project" value="GO_Central"/>
</dbReference>
<dbReference type="GO" id="GO:0042803">
    <property type="term" value="F:protein homodimerization activity"/>
    <property type="evidence" value="ECO:0000250"/>
    <property type="project" value="UniProtKB"/>
</dbReference>
<dbReference type="GO" id="GO:0001675">
    <property type="term" value="P:acrosome assembly"/>
    <property type="evidence" value="ECO:0000250"/>
    <property type="project" value="UniProtKB"/>
</dbReference>
<dbReference type="GO" id="GO:0086023">
    <property type="term" value="P:adenylate cyclase-activating adrenergic receptor signaling pathway involved in heart process"/>
    <property type="evidence" value="ECO:0007669"/>
    <property type="project" value="Ensembl"/>
</dbReference>
<dbReference type="GO" id="GO:0048738">
    <property type="term" value="P:cardiac muscle tissue development"/>
    <property type="evidence" value="ECO:0007669"/>
    <property type="project" value="Ensembl"/>
</dbReference>
<dbReference type="GO" id="GO:0050802">
    <property type="term" value="P:circadian sleep/wake cycle, sleep"/>
    <property type="evidence" value="ECO:0000250"/>
    <property type="project" value="UniProtKB"/>
</dbReference>
<dbReference type="GO" id="GO:0006874">
    <property type="term" value="P:intracellular calcium ion homeostasis"/>
    <property type="evidence" value="ECO:0000250"/>
    <property type="project" value="UniProtKB"/>
</dbReference>
<dbReference type="GO" id="GO:0045475">
    <property type="term" value="P:locomotor rhythm"/>
    <property type="evidence" value="ECO:0000250"/>
    <property type="project" value="UniProtKB"/>
</dbReference>
<dbReference type="GO" id="GO:0046716">
    <property type="term" value="P:muscle cell cellular homeostasis"/>
    <property type="evidence" value="ECO:0007669"/>
    <property type="project" value="Ensembl"/>
</dbReference>
<dbReference type="GO" id="GO:1901895">
    <property type="term" value="P:negative regulation of ATPase-coupled calcium transmembrane transporter activity"/>
    <property type="evidence" value="ECO:0000250"/>
    <property type="project" value="UniProtKB"/>
</dbReference>
<dbReference type="GO" id="GO:1902081">
    <property type="term" value="P:negative regulation of calcium ion import into sarcoplasmic reticulum"/>
    <property type="evidence" value="ECO:0000250"/>
    <property type="project" value="UniProtKB"/>
</dbReference>
<dbReference type="GO" id="GO:0010459">
    <property type="term" value="P:negative regulation of heart rate"/>
    <property type="evidence" value="ECO:0000318"/>
    <property type="project" value="GO_Central"/>
</dbReference>
<dbReference type="GO" id="GO:0007219">
    <property type="term" value="P:Notch signaling pathway"/>
    <property type="evidence" value="ECO:0007669"/>
    <property type="project" value="Ensembl"/>
</dbReference>
<dbReference type="GO" id="GO:0090279">
    <property type="term" value="P:regulation of calcium ion import"/>
    <property type="evidence" value="ECO:0007669"/>
    <property type="project" value="Ensembl"/>
</dbReference>
<dbReference type="GO" id="GO:0051924">
    <property type="term" value="P:regulation of calcium ion transport"/>
    <property type="evidence" value="ECO:0000250"/>
    <property type="project" value="UniProtKB"/>
</dbReference>
<dbReference type="GO" id="GO:0086004">
    <property type="term" value="P:regulation of cardiac muscle cell contraction"/>
    <property type="evidence" value="ECO:0007669"/>
    <property type="project" value="Ensembl"/>
</dbReference>
<dbReference type="GO" id="GO:0010881">
    <property type="term" value="P:regulation of cardiac muscle contraction by regulation of the release of sequestered calcium ion"/>
    <property type="evidence" value="ECO:0007669"/>
    <property type="project" value="Ensembl"/>
</dbReference>
<dbReference type="GO" id="GO:1901077">
    <property type="term" value="P:regulation of relaxation of muscle"/>
    <property type="evidence" value="ECO:0007669"/>
    <property type="project" value="Ensembl"/>
</dbReference>
<dbReference type="GO" id="GO:0086092">
    <property type="term" value="P:regulation of the force of heart contraction by cardiac conduction"/>
    <property type="evidence" value="ECO:0007669"/>
    <property type="project" value="Ensembl"/>
</dbReference>
<dbReference type="GO" id="GO:0008542">
    <property type="term" value="P:visual learning"/>
    <property type="evidence" value="ECO:0000250"/>
    <property type="project" value="UniProtKB"/>
</dbReference>
<dbReference type="CDD" id="cd20250">
    <property type="entry name" value="Phospholamban"/>
    <property type="match status" value="1"/>
</dbReference>
<dbReference type="FunFam" id="1.20.5.290:FF:000001">
    <property type="entry name" value="Cardiac phospholamban"/>
    <property type="match status" value="1"/>
</dbReference>
<dbReference type="Gene3D" id="1.20.5.290">
    <property type="entry name" value="Phospholamban"/>
    <property type="match status" value="1"/>
</dbReference>
<dbReference type="InterPro" id="IPR005984">
    <property type="entry name" value="PLB"/>
</dbReference>
<dbReference type="NCBIfam" id="TIGR01294">
    <property type="entry name" value="P_lamban"/>
    <property type="match status" value="1"/>
</dbReference>
<dbReference type="PANTHER" id="PTHR21194">
    <property type="entry name" value="CARDIAC PHOSPHOLAMBAN"/>
    <property type="match status" value="1"/>
</dbReference>
<dbReference type="PANTHER" id="PTHR21194:SF1">
    <property type="entry name" value="CARDIAC PHOSPHOLAMBAN"/>
    <property type="match status" value="1"/>
</dbReference>
<dbReference type="Pfam" id="PF04272">
    <property type="entry name" value="Phospholamban"/>
    <property type="match status" value="1"/>
</dbReference>
<dbReference type="PIRSF" id="PIRSF001665">
    <property type="entry name" value="PLB"/>
    <property type="match status" value="1"/>
</dbReference>
<keyword id="KW-0002">3D-structure</keyword>
<keyword id="KW-0007">Acetylation</keyword>
<keyword id="KW-0256">Endoplasmic reticulum</keyword>
<keyword id="KW-0449">Lipoprotein</keyword>
<keyword id="KW-0472">Membrane</keyword>
<keyword id="KW-0496">Mitochondrion</keyword>
<keyword id="KW-0564">Palmitate</keyword>
<keyword id="KW-0597">Phosphoprotein</keyword>
<keyword id="KW-1185">Reference proteome</keyword>
<keyword id="KW-0703">Sarcoplasmic reticulum</keyword>
<keyword id="KW-0812">Transmembrane</keyword>
<keyword id="KW-1133">Transmembrane helix</keyword>